<name>GLGB_THEVB</name>
<gene>
    <name evidence="1" type="primary">glgB</name>
    <name type="ordered locus">tll0578</name>
</gene>
<dbReference type="EC" id="2.4.1.18" evidence="1"/>
<dbReference type="EMBL" id="BA000039">
    <property type="protein sequence ID" value="BAC08130.1"/>
    <property type="molecule type" value="Genomic_DNA"/>
</dbReference>
<dbReference type="RefSeq" id="NP_681368.1">
    <property type="nucleotide sequence ID" value="NC_004113.1"/>
</dbReference>
<dbReference type="RefSeq" id="WP_011056426.1">
    <property type="nucleotide sequence ID" value="NC_004113.1"/>
</dbReference>
<dbReference type="SMR" id="Q8DLB8"/>
<dbReference type="STRING" id="197221.gene:10747168"/>
<dbReference type="CAZy" id="CBM48">
    <property type="family name" value="Carbohydrate-Binding Module Family 48"/>
</dbReference>
<dbReference type="CAZy" id="GH13">
    <property type="family name" value="Glycoside Hydrolase Family 13"/>
</dbReference>
<dbReference type="EnsemblBacteria" id="BAC08130">
    <property type="protein sequence ID" value="BAC08130"/>
    <property type="gene ID" value="BAC08130"/>
</dbReference>
<dbReference type="KEGG" id="tel:tll0578"/>
<dbReference type="PATRIC" id="fig|197221.4.peg.610"/>
<dbReference type="eggNOG" id="COG0296">
    <property type="taxonomic scope" value="Bacteria"/>
</dbReference>
<dbReference type="UniPathway" id="UPA00164"/>
<dbReference type="Proteomes" id="UP000000440">
    <property type="component" value="Chromosome"/>
</dbReference>
<dbReference type="GO" id="GO:0005829">
    <property type="term" value="C:cytosol"/>
    <property type="evidence" value="ECO:0007669"/>
    <property type="project" value="TreeGrafter"/>
</dbReference>
<dbReference type="GO" id="GO:0003844">
    <property type="term" value="F:1,4-alpha-glucan branching enzyme activity"/>
    <property type="evidence" value="ECO:0007669"/>
    <property type="project" value="UniProtKB-UniRule"/>
</dbReference>
<dbReference type="GO" id="GO:0043169">
    <property type="term" value="F:cation binding"/>
    <property type="evidence" value="ECO:0007669"/>
    <property type="project" value="InterPro"/>
</dbReference>
<dbReference type="GO" id="GO:0004553">
    <property type="term" value="F:hydrolase activity, hydrolyzing O-glycosyl compounds"/>
    <property type="evidence" value="ECO:0007669"/>
    <property type="project" value="InterPro"/>
</dbReference>
<dbReference type="GO" id="GO:0005978">
    <property type="term" value="P:glycogen biosynthetic process"/>
    <property type="evidence" value="ECO:0007669"/>
    <property type="project" value="UniProtKB-UniRule"/>
</dbReference>
<dbReference type="CDD" id="cd11322">
    <property type="entry name" value="AmyAc_Glg_BE"/>
    <property type="match status" value="1"/>
</dbReference>
<dbReference type="CDD" id="cd02855">
    <property type="entry name" value="E_set_GBE_prok_N"/>
    <property type="match status" value="1"/>
</dbReference>
<dbReference type="FunFam" id="2.60.40.10:FF:000169">
    <property type="entry name" value="1,4-alpha-glucan branching enzyme GlgB"/>
    <property type="match status" value="1"/>
</dbReference>
<dbReference type="FunFam" id="2.60.40.1180:FF:000002">
    <property type="entry name" value="1,4-alpha-glucan branching enzyme GlgB"/>
    <property type="match status" value="1"/>
</dbReference>
<dbReference type="FunFam" id="3.20.20.80:FF:000003">
    <property type="entry name" value="1,4-alpha-glucan branching enzyme GlgB"/>
    <property type="match status" value="1"/>
</dbReference>
<dbReference type="Gene3D" id="3.20.20.80">
    <property type="entry name" value="Glycosidases"/>
    <property type="match status" value="1"/>
</dbReference>
<dbReference type="Gene3D" id="2.60.40.1180">
    <property type="entry name" value="Golgi alpha-mannosidase II"/>
    <property type="match status" value="1"/>
</dbReference>
<dbReference type="Gene3D" id="2.60.40.10">
    <property type="entry name" value="Immunoglobulins"/>
    <property type="match status" value="2"/>
</dbReference>
<dbReference type="HAMAP" id="MF_00685">
    <property type="entry name" value="GlgB"/>
    <property type="match status" value="1"/>
</dbReference>
<dbReference type="InterPro" id="IPR006048">
    <property type="entry name" value="A-amylase/branching_C"/>
</dbReference>
<dbReference type="InterPro" id="IPR037439">
    <property type="entry name" value="Branching_enzy"/>
</dbReference>
<dbReference type="InterPro" id="IPR006407">
    <property type="entry name" value="GlgB"/>
</dbReference>
<dbReference type="InterPro" id="IPR054169">
    <property type="entry name" value="GlgB_N"/>
</dbReference>
<dbReference type="InterPro" id="IPR044143">
    <property type="entry name" value="GlgB_N_E_set_prok"/>
</dbReference>
<dbReference type="InterPro" id="IPR006047">
    <property type="entry name" value="Glyco_hydro_13_cat_dom"/>
</dbReference>
<dbReference type="InterPro" id="IPR004193">
    <property type="entry name" value="Glyco_hydro_13_N"/>
</dbReference>
<dbReference type="InterPro" id="IPR013780">
    <property type="entry name" value="Glyco_hydro_b"/>
</dbReference>
<dbReference type="InterPro" id="IPR017853">
    <property type="entry name" value="Glycoside_hydrolase_SF"/>
</dbReference>
<dbReference type="InterPro" id="IPR013783">
    <property type="entry name" value="Ig-like_fold"/>
</dbReference>
<dbReference type="InterPro" id="IPR014756">
    <property type="entry name" value="Ig_E-set"/>
</dbReference>
<dbReference type="NCBIfam" id="TIGR01515">
    <property type="entry name" value="branching_enzym"/>
    <property type="match status" value="1"/>
</dbReference>
<dbReference type="NCBIfam" id="NF003811">
    <property type="entry name" value="PRK05402.1"/>
    <property type="match status" value="1"/>
</dbReference>
<dbReference type="NCBIfam" id="NF008967">
    <property type="entry name" value="PRK12313.1"/>
    <property type="match status" value="1"/>
</dbReference>
<dbReference type="PANTHER" id="PTHR43651">
    <property type="entry name" value="1,4-ALPHA-GLUCAN-BRANCHING ENZYME"/>
    <property type="match status" value="1"/>
</dbReference>
<dbReference type="PANTHER" id="PTHR43651:SF3">
    <property type="entry name" value="1,4-ALPHA-GLUCAN-BRANCHING ENZYME"/>
    <property type="match status" value="1"/>
</dbReference>
<dbReference type="Pfam" id="PF00128">
    <property type="entry name" value="Alpha-amylase"/>
    <property type="match status" value="2"/>
</dbReference>
<dbReference type="Pfam" id="PF02806">
    <property type="entry name" value="Alpha-amylase_C"/>
    <property type="match status" value="1"/>
</dbReference>
<dbReference type="Pfam" id="PF02922">
    <property type="entry name" value="CBM_48"/>
    <property type="match status" value="1"/>
</dbReference>
<dbReference type="Pfam" id="PF22019">
    <property type="entry name" value="GlgB_N"/>
    <property type="match status" value="1"/>
</dbReference>
<dbReference type="PIRSF" id="PIRSF000463">
    <property type="entry name" value="GlgB"/>
    <property type="match status" value="1"/>
</dbReference>
<dbReference type="SMART" id="SM00642">
    <property type="entry name" value="Aamy"/>
    <property type="match status" value="1"/>
</dbReference>
<dbReference type="SUPFAM" id="SSF51445">
    <property type="entry name" value="(Trans)glycosidases"/>
    <property type="match status" value="1"/>
</dbReference>
<dbReference type="SUPFAM" id="SSF81296">
    <property type="entry name" value="E set domains"/>
    <property type="match status" value="2"/>
</dbReference>
<dbReference type="SUPFAM" id="SSF51011">
    <property type="entry name" value="Glycosyl hydrolase domain"/>
    <property type="match status" value="1"/>
</dbReference>
<proteinExistence type="inferred from homology"/>
<feature type="chain" id="PRO_0000188754" description="1,4-alpha-glucan branching enzyme GlgB">
    <location>
        <begin position="1"/>
        <end position="766"/>
    </location>
</feature>
<feature type="active site" description="Nucleophile" evidence="1">
    <location>
        <position position="431"/>
    </location>
</feature>
<feature type="active site" description="Proton donor" evidence="1">
    <location>
        <position position="484"/>
    </location>
</feature>
<sequence length="766" mass="89885">MTVSPEQIDRIVSNQHHDPFEILGCHQIQQNGQSVWAVRAYLPNAERVSVLCPEQRQEYPMTPVHHPHFFECHIPVAELNNYQLKIYENGHERVIYDPYAFRSPKLTDFDIHLFAEGNHHRIYEKLGAHLLTVDGVEGVYFAVWAPNARNVSVIGDFNHWDGRKHQMARRGNGIWELFIPGLSVGERYKYEIKNQEGHIYEKSDPYGFYQEPRPKTASIVTDLNSYEWGDSDWLEKRRHTDPLNQPISVYEVHLGSWLHASMEDPPIGADGQPQEPVQAAELKPWARFLTYRELAAKLIPYVKELGYTHIELLPVAEHPFDGSWGYQVTGYYAPTSRYGSPHDFMYFVDQCHQNGIGVIVDWVPGHFPKDGHGLAFFDGTHLYEHADPRKGEHKEWGTLVFNYGRHEVRNFLVANALFWFDKYHIDGIRVDAVASMLYLDYGRKEGEWIPNEYGGRENLEAANFLRQVNHVIFSYFPGILSIAEESTAWPMVSWPTYMGGLGFNLKWNMGWMHDMLDYFSMDPWFRQFHHNNVTFSMWYHHSENFMLALSHDEVVHGKSHIIGKMPGDRWQKFANLRCLFAYMFTHPGKKTMFMGMEFAQWSEWNVWSDLEWHLLQYEPHQQIKRFFGDLNHLYRSQPALYSQDFKQEGFEWIDCSDNRHSVVSFIRWDKDYQDFVVVVCNFTPQPHSHYRIGVPEHGFYRELFNSDAREYGGSNMGNLGGKWADEWPYHQRRYSLDLCLPPLAVLILKLDREKTVAERARYNLQS</sequence>
<keyword id="KW-0119">Carbohydrate metabolism</keyword>
<keyword id="KW-0320">Glycogen biosynthesis</keyword>
<keyword id="KW-0321">Glycogen metabolism</keyword>
<keyword id="KW-0328">Glycosyltransferase</keyword>
<keyword id="KW-1185">Reference proteome</keyword>
<keyword id="KW-0808">Transferase</keyword>
<accession>Q8DLB8</accession>
<comment type="function">
    <text evidence="1">Catalyzes the formation of the alpha-1,6-glucosidic linkages in glycogen by scission of a 1,4-alpha-linked oligosaccharide from growing alpha-1,4-glucan chains and the subsequent attachment of the oligosaccharide to the alpha-1,6 position.</text>
</comment>
<comment type="catalytic activity">
    <reaction evidence="1">
        <text>Transfers a segment of a (1-&gt;4)-alpha-D-glucan chain to a primary hydroxy group in a similar glucan chain.</text>
        <dbReference type="EC" id="2.4.1.18"/>
    </reaction>
</comment>
<comment type="pathway">
    <text evidence="1">Glycan biosynthesis; glycogen biosynthesis.</text>
</comment>
<comment type="subunit">
    <text evidence="1">Monomer.</text>
</comment>
<comment type="similarity">
    <text evidence="1">Belongs to the glycosyl hydrolase 13 family. GlgB subfamily.</text>
</comment>
<evidence type="ECO:0000255" key="1">
    <source>
        <dbReference type="HAMAP-Rule" id="MF_00685"/>
    </source>
</evidence>
<protein>
    <recommendedName>
        <fullName evidence="1">1,4-alpha-glucan branching enzyme GlgB</fullName>
        <ecNumber evidence="1">2.4.1.18</ecNumber>
    </recommendedName>
    <alternativeName>
        <fullName evidence="1">1,4-alpha-D-glucan:1,4-alpha-D-glucan 6-glucosyl-transferase</fullName>
    </alternativeName>
    <alternativeName>
        <fullName evidence="1">Alpha-(1-&gt;4)-glucan branching enzyme</fullName>
    </alternativeName>
    <alternativeName>
        <fullName evidence="1">Glycogen branching enzyme</fullName>
        <shortName evidence="1">BE</shortName>
    </alternativeName>
</protein>
<reference key="1">
    <citation type="journal article" date="2002" name="DNA Res.">
        <title>Complete genome structure of the thermophilic cyanobacterium Thermosynechococcus elongatus BP-1.</title>
        <authorList>
            <person name="Nakamura Y."/>
            <person name="Kaneko T."/>
            <person name="Sato S."/>
            <person name="Ikeuchi M."/>
            <person name="Katoh H."/>
            <person name="Sasamoto S."/>
            <person name="Watanabe A."/>
            <person name="Iriguchi M."/>
            <person name="Kawashima K."/>
            <person name="Kimura T."/>
            <person name="Kishida Y."/>
            <person name="Kiyokawa C."/>
            <person name="Kohara M."/>
            <person name="Matsumoto M."/>
            <person name="Matsuno A."/>
            <person name="Nakazaki N."/>
            <person name="Shimpo S."/>
            <person name="Sugimoto M."/>
            <person name="Takeuchi C."/>
            <person name="Yamada M."/>
            <person name="Tabata S."/>
        </authorList>
    </citation>
    <scope>NUCLEOTIDE SEQUENCE [LARGE SCALE GENOMIC DNA]</scope>
    <source>
        <strain>NIES-2133 / IAM M-273 / BP-1</strain>
    </source>
</reference>
<organism>
    <name type="scientific">Thermosynechococcus vestitus (strain NIES-2133 / IAM M-273 / BP-1)</name>
    <dbReference type="NCBI Taxonomy" id="197221"/>
    <lineage>
        <taxon>Bacteria</taxon>
        <taxon>Bacillati</taxon>
        <taxon>Cyanobacteriota</taxon>
        <taxon>Cyanophyceae</taxon>
        <taxon>Acaryochloridales</taxon>
        <taxon>Thermosynechococcaceae</taxon>
        <taxon>Thermosynechococcus</taxon>
    </lineage>
</organism>